<name>DONS_MOUSE</name>
<dbReference type="EMBL" id="BC043316">
    <property type="protein sequence ID" value="AAH43316.1"/>
    <property type="molecule type" value="mRNA"/>
</dbReference>
<dbReference type="EMBL" id="AK080299">
    <property type="protein sequence ID" value="BAC37869.1"/>
    <property type="molecule type" value="mRNA"/>
</dbReference>
<dbReference type="EMBL" id="AF193608">
    <property type="protein sequence ID" value="AAF23122.1"/>
    <property type="molecule type" value="mRNA"/>
</dbReference>
<dbReference type="CCDS" id="CCDS28330.1"/>
<dbReference type="RefSeq" id="NP_068366.1">
    <property type="nucleotide sequence ID" value="NM_021720.1"/>
</dbReference>
<dbReference type="RefSeq" id="XP_006523132.1">
    <property type="nucleotide sequence ID" value="XM_006523069.5"/>
</dbReference>
<dbReference type="SMR" id="Q9QXP4"/>
<dbReference type="FunCoup" id="Q9QXP4">
    <property type="interactions" value="2719"/>
</dbReference>
<dbReference type="IntAct" id="Q9QXP4">
    <property type="interactions" value="1"/>
</dbReference>
<dbReference type="MINT" id="Q9QXP4"/>
<dbReference type="STRING" id="10090.ENSMUSP00000023682"/>
<dbReference type="GlyGen" id="Q9QXP4">
    <property type="glycosylation" value="1 site"/>
</dbReference>
<dbReference type="iPTMnet" id="Q9QXP4"/>
<dbReference type="PhosphoSitePlus" id="Q9QXP4"/>
<dbReference type="PaxDb" id="10090-ENSMUSP00000023682"/>
<dbReference type="ProteomicsDB" id="277373"/>
<dbReference type="Pumba" id="Q9QXP4"/>
<dbReference type="Ensembl" id="ENSMUST00000023682.12">
    <property type="protein sequence ID" value="ENSMUSP00000023682.5"/>
    <property type="gene ID" value="ENSMUSG00000022960.14"/>
</dbReference>
<dbReference type="GeneID" id="60364"/>
<dbReference type="KEGG" id="mmu:60364"/>
<dbReference type="UCSC" id="uc007zyc.1">
    <property type="organism name" value="mouse"/>
</dbReference>
<dbReference type="AGR" id="MGI:1890621"/>
<dbReference type="CTD" id="29980"/>
<dbReference type="MGI" id="MGI:1890621">
    <property type="gene designation" value="Donson"/>
</dbReference>
<dbReference type="VEuPathDB" id="HostDB:ENSMUSG00000022960"/>
<dbReference type="eggNOG" id="KOG4734">
    <property type="taxonomic scope" value="Eukaryota"/>
</dbReference>
<dbReference type="GeneTree" id="ENSGT00390000000447"/>
<dbReference type="InParanoid" id="Q9QXP4"/>
<dbReference type="OMA" id="WCLKTRV"/>
<dbReference type="OrthoDB" id="534063at2759"/>
<dbReference type="PhylomeDB" id="Q9QXP4"/>
<dbReference type="TreeFam" id="TF318976"/>
<dbReference type="BioGRID-ORCS" id="60364">
    <property type="hits" value="21 hits in 80 CRISPR screens"/>
</dbReference>
<dbReference type="ChiTaRS" id="Donson">
    <property type="organism name" value="mouse"/>
</dbReference>
<dbReference type="PRO" id="PR:Q9QXP4"/>
<dbReference type="Proteomes" id="UP000000589">
    <property type="component" value="Chromosome 16"/>
</dbReference>
<dbReference type="RNAct" id="Q9QXP4">
    <property type="molecule type" value="protein"/>
</dbReference>
<dbReference type="Bgee" id="ENSMUSG00000022960">
    <property type="expression patterns" value="Expressed in spermatocyte and 245 other cell types or tissues"/>
</dbReference>
<dbReference type="ExpressionAtlas" id="Q9QXP4">
    <property type="expression patterns" value="baseline and differential"/>
</dbReference>
<dbReference type="GO" id="GO:0005634">
    <property type="term" value="C:nucleus"/>
    <property type="evidence" value="ECO:0000250"/>
    <property type="project" value="UniProtKB"/>
</dbReference>
<dbReference type="GO" id="GO:0005657">
    <property type="term" value="C:replication fork"/>
    <property type="evidence" value="ECO:0000250"/>
    <property type="project" value="UniProtKB"/>
</dbReference>
<dbReference type="GO" id="GO:0030894">
    <property type="term" value="C:replisome"/>
    <property type="evidence" value="ECO:0000250"/>
    <property type="project" value="UniProtKB"/>
</dbReference>
<dbReference type="GO" id="GO:0000077">
    <property type="term" value="P:DNA damage checkpoint signaling"/>
    <property type="evidence" value="ECO:0000250"/>
    <property type="project" value="UniProtKB"/>
</dbReference>
<dbReference type="GO" id="GO:0006260">
    <property type="term" value="P:DNA replication"/>
    <property type="evidence" value="ECO:0000250"/>
    <property type="project" value="UniProtKB"/>
</dbReference>
<dbReference type="GO" id="GO:0033314">
    <property type="term" value="P:mitotic DNA replication checkpoint signaling"/>
    <property type="evidence" value="ECO:0000250"/>
    <property type="project" value="UniProtKB"/>
</dbReference>
<dbReference type="GO" id="GO:0007095">
    <property type="term" value="P:mitotic G2 DNA damage checkpoint signaling"/>
    <property type="evidence" value="ECO:0000250"/>
    <property type="project" value="UniProtKB"/>
</dbReference>
<dbReference type="GO" id="GO:0031297">
    <property type="term" value="P:replication fork processing"/>
    <property type="evidence" value="ECO:0000250"/>
    <property type="project" value="UniProtKB"/>
</dbReference>
<dbReference type="InterPro" id="IPR024861">
    <property type="entry name" value="Donson"/>
</dbReference>
<dbReference type="PANTHER" id="PTHR12972">
    <property type="entry name" value="DOWNSTREAM NEIGHBOR OF SON"/>
    <property type="match status" value="1"/>
</dbReference>
<dbReference type="PANTHER" id="PTHR12972:SF0">
    <property type="entry name" value="PROTEIN DOWNSTREAM NEIGHBOR OF SON"/>
    <property type="match status" value="1"/>
</dbReference>
<dbReference type="PRINTS" id="PR02064">
    <property type="entry name" value="DONSON"/>
</dbReference>
<evidence type="ECO:0000250" key="1">
    <source>
        <dbReference type="UniProtKB" id="Q9NYP3"/>
    </source>
</evidence>
<evidence type="ECO:0000256" key="2">
    <source>
        <dbReference type="SAM" id="MobiDB-lite"/>
    </source>
</evidence>
<evidence type="ECO:0000269" key="3">
    <source>
    </source>
</evidence>
<evidence type="ECO:0000305" key="4"/>
<sequence length="560" mass="61987">MAVSVPGYSPSFKRPPETVRLRRKRSRDHGAAVPASLPEPAPRRAALAAGLPLRPFPTAGGRGGAAATIARRNPFARLDNRPRVSDEASEEPLRGPQGASGPLLDSNEENNLLWEDTSSHERTGTELSQSQRVSLSESDTWSSDGTELPVDWSIKTRLLFTSSQPFSWADHLKAQEEAQGLVQHCRATEVTLPQSIQDPKLSTALRCAFQQALVYWLHPAFSWLPLFPRIGADRKMAAKTSPWSADETLQHALMSDWSVSFTSLYNLLKTKLCPYFYVCSYQFTVLFRAAGLAGSSVITALISPTTRGLREAMRNEGIEFSLPLLEEIGHKKKVRDPSLESEEEQAVSDEDEEESFSWLEEIGVQDQIKKPDVISIKLRKEKHEVQMDHRPESVVLVKGLNTFKLLNFLINCKSLVATSGAQAGLPPTLLSPIAFRGASMQMLKARSSNVKTQALSGYRDKFSLDITGPVMPHALHSMSMLLRSSQRGSFSAGLYAHEPTAVFNVGLSLDKELDRKVAREDLANCGLHPKTLEQLSQRPVLGKSSLRSVEMSDYILSWRS</sequence>
<feature type="chain" id="PRO_0000079980" description="Protein downstream neighbor of Son">
    <location>
        <begin position="1"/>
        <end position="560"/>
    </location>
</feature>
<feature type="region of interest" description="Disordered" evidence="2">
    <location>
        <begin position="1"/>
        <end position="140"/>
    </location>
</feature>
<feature type="compositionally biased region" description="Low complexity" evidence="2">
    <location>
        <begin position="34"/>
        <end position="53"/>
    </location>
</feature>
<feature type="compositionally biased region" description="Polar residues" evidence="2">
    <location>
        <begin position="125"/>
        <end position="140"/>
    </location>
</feature>
<feature type="sequence conflict" description="In Ref. 2; BAC37869." evidence="4" ref="2">
    <original>A</original>
    <variation>D</variation>
    <location>
        <position position="32"/>
    </location>
</feature>
<feature type="sequence conflict" description="In Ref. 2; BAC37869." evidence="4" ref="2">
    <original>S</original>
    <variation>L</variation>
    <location>
        <position position="36"/>
    </location>
</feature>
<feature type="sequence conflict" description="In Ref. 2; BAC37869." evidence="4" ref="2">
    <original>R</original>
    <variation>M</variation>
    <location>
        <position position="72"/>
    </location>
</feature>
<feature type="sequence conflict" description="In Ref. 2; BAC37869." evidence="4" ref="2">
    <original>L</original>
    <variation>V</variation>
    <location>
        <position position="93"/>
    </location>
</feature>
<feature type="sequence conflict" description="In Ref. 2; BAC37869." evidence="4" ref="2">
    <original>Q</original>
    <variation>H</variation>
    <location>
        <position position="97"/>
    </location>
</feature>
<feature type="sequence conflict" description="In Ref. 2; BAC37869." evidence="4" ref="2">
    <original>S</original>
    <variation>W</variation>
    <location>
        <position position="100"/>
    </location>
</feature>
<reference key="1">
    <citation type="journal article" date="2004" name="Genome Res.">
        <title>The status, quality, and expansion of the NIH full-length cDNA project: the Mammalian Gene Collection (MGC).</title>
        <authorList>
            <consortium name="The MGC Project Team"/>
        </authorList>
    </citation>
    <scope>NUCLEOTIDE SEQUENCE [LARGE SCALE MRNA]</scope>
    <source>
        <strain>FVB/N</strain>
        <tissue>Mammary tumor</tissue>
    </source>
</reference>
<reference key="2">
    <citation type="journal article" date="2005" name="Science">
        <title>The transcriptional landscape of the mammalian genome.</title>
        <authorList>
            <person name="Carninci P."/>
            <person name="Kasukawa T."/>
            <person name="Katayama S."/>
            <person name="Gough J."/>
            <person name="Frith M.C."/>
            <person name="Maeda N."/>
            <person name="Oyama R."/>
            <person name="Ravasi T."/>
            <person name="Lenhard B."/>
            <person name="Wells C."/>
            <person name="Kodzius R."/>
            <person name="Shimokawa K."/>
            <person name="Bajic V.B."/>
            <person name="Brenner S.E."/>
            <person name="Batalov S."/>
            <person name="Forrest A.R."/>
            <person name="Zavolan M."/>
            <person name="Davis M.J."/>
            <person name="Wilming L.G."/>
            <person name="Aidinis V."/>
            <person name="Allen J.E."/>
            <person name="Ambesi-Impiombato A."/>
            <person name="Apweiler R."/>
            <person name="Aturaliya R.N."/>
            <person name="Bailey T.L."/>
            <person name="Bansal M."/>
            <person name="Baxter L."/>
            <person name="Beisel K.W."/>
            <person name="Bersano T."/>
            <person name="Bono H."/>
            <person name="Chalk A.M."/>
            <person name="Chiu K.P."/>
            <person name="Choudhary V."/>
            <person name="Christoffels A."/>
            <person name="Clutterbuck D.R."/>
            <person name="Crowe M.L."/>
            <person name="Dalla E."/>
            <person name="Dalrymple B.P."/>
            <person name="de Bono B."/>
            <person name="Della Gatta G."/>
            <person name="di Bernardo D."/>
            <person name="Down T."/>
            <person name="Engstrom P."/>
            <person name="Fagiolini M."/>
            <person name="Faulkner G."/>
            <person name="Fletcher C.F."/>
            <person name="Fukushima T."/>
            <person name="Furuno M."/>
            <person name="Futaki S."/>
            <person name="Gariboldi M."/>
            <person name="Georgii-Hemming P."/>
            <person name="Gingeras T.R."/>
            <person name="Gojobori T."/>
            <person name="Green R.E."/>
            <person name="Gustincich S."/>
            <person name="Harbers M."/>
            <person name="Hayashi Y."/>
            <person name="Hensch T.K."/>
            <person name="Hirokawa N."/>
            <person name="Hill D."/>
            <person name="Huminiecki L."/>
            <person name="Iacono M."/>
            <person name="Ikeo K."/>
            <person name="Iwama A."/>
            <person name="Ishikawa T."/>
            <person name="Jakt M."/>
            <person name="Kanapin A."/>
            <person name="Katoh M."/>
            <person name="Kawasawa Y."/>
            <person name="Kelso J."/>
            <person name="Kitamura H."/>
            <person name="Kitano H."/>
            <person name="Kollias G."/>
            <person name="Krishnan S.P."/>
            <person name="Kruger A."/>
            <person name="Kummerfeld S.K."/>
            <person name="Kurochkin I.V."/>
            <person name="Lareau L.F."/>
            <person name="Lazarevic D."/>
            <person name="Lipovich L."/>
            <person name="Liu J."/>
            <person name="Liuni S."/>
            <person name="McWilliam S."/>
            <person name="Madan Babu M."/>
            <person name="Madera M."/>
            <person name="Marchionni L."/>
            <person name="Matsuda H."/>
            <person name="Matsuzawa S."/>
            <person name="Miki H."/>
            <person name="Mignone F."/>
            <person name="Miyake S."/>
            <person name="Morris K."/>
            <person name="Mottagui-Tabar S."/>
            <person name="Mulder N."/>
            <person name="Nakano N."/>
            <person name="Nakauchi H."/>
            <person name="Ng P."/>
            <person name="Nilsson R."/>
            <person name="Nishiguchi S."/>
            <person name="Nishikawa S."/>
            <person name="Nori F."/>
            <person name="Ohara O."/>
            <person name="Okazaki Y."/>
            <person name="Orlando V."/>
            <person name="Pang K.C."/>
            <person name="Pavan W.J."/>
            <person name="Pavesi G."/>
            <person name="Pesole G."/>
            <person name="Petrovsky N."/>
            <person name="Piazza S."/>
            <person name="Reed J."/>
            <person name="Reid J.F."/>
            <person name="Ring B.Z."/>
            <person name="Ringwald M."/>
            <person name="Rost B."/>
            <person name="Ruan Y."/>
            <person name="Salzberg S.L."/>
            <person name="Sandelin A."/>
            <person name="Schneider C."/>
            <person name="Schoenbach C."/>
            <person name="Sekiguchi K."/>
            <person name="Semple C.A."/>
            <person name="Seno S."/>
            <person name="Sessa L."/>
            <person name="Sheng Y."/>
            <person name="Shibata Y."/>
            <person name="Shimada H."/>
            <person name="Shimada K."/>
            <person name="Silva D."/>
            <person name="Sinclair B."/>
            <person name="Sperling S."/>
            <person name="Stupka E."/>
            <person name="Sugiura K."/>
            <person name="Sultana R."/>
            <person name="Takenaka Y."/>
            <person name="Taki K."/>
            <person name="Tammoja K."/>
            <person name="Tan S.L."/>
            <person name="Tang S."/>
            <person name="Taylor M.S."/>
            <person name="Tegner J."/>
            <person name="Teichmann S.A."/>
            <person name="Ueda H.R."/>
            <person name="van Nimwegen E."/>
            <person name="Verardo R."/>
            <person name="Wei C.L."/>
            <person name="Yagi K."/>
            <person name="Yamanishi H."/>
            <person name="Zabarovsky E."/>
            <person name="Zhu S."/>
            <person name="Zimmer A."/>
            <person name="Hide W."/>
            <person name="Bult C."/>
            <person name="Grimmond S.M."/>
            <person name="Teasdale R.D."/>
            <person name="Liu E.T."/>
            <person name="Brusic V."/>
            <person name="Quackenbush J."/>
            <person name="Wahlestedt C."/>
            <person name="Mattick J.S."/>
            <person name="Hume D.A."/>
            <person name="Kai C."/>
            <person name="Sasaki D."/>
            <person name="Tomaru Y."/>
            <person name="Fukuda S."/>
            <person name="Kanamori-Katayama M."/>
            <person name="Suzuki M."/>
            <person name="Aoki J."/>
            <person name="Arakawa T."/>
            <person name="Iida J."/>
            <person name="Imamura K."/>
            <person name="Itoh M."/>
            <person name="Kato T."/>
            <person name="Kawaji H."/>
            <person name="Kawagashira N."/>
            <person name="Kawashima T."/>
            <person name="Kojima M."/>
            <person name="Kondo S."/>
            <person name="Konno H."/>
            <person name="Nakano K."/>
            <person name="Ninomiya N."/>
            <person name="Nishio T."/>
            <person name="Okada M."/>
            <person name="Plessy C."/>
            <person name="Shibata K."/>
            <person name="Shiraki T."/>
            <person name="Suzuki S."/>
            <person name="Tagami M."/>
            <person name="Waki K."/>
            <person name="Watahiki A."/>
            <person name="Okamura-Oho Y."/>
            <person name="Suzuki H."/>
            <person name="Kawai J."/>
            <person name="Hayashizaki Y."/>
        </authorList>
    </citation>
    <scope>NUCLEOTIDE SEQUENCE [LARGE SCALE MRNA] OF 1-377</scope>
    <source>
        <strain>C57BL/6J</strain>
        <tissue>Thymus</tissue>
    </source>
</reference>
<reference key="3">
    <citation type="journal article" date="2000" name="Genomics">
        <title>Organization and conservation of the GART/SON/DONSON locus in mouse and human genomes.</title>
        <authorList>
            <person name="Wynn S.L."/>
            <person name="Fisher R.A."/>
            <person name="Pagel C."/>
            <person name="Price M."/>
            <person name="Liu Q.Y."/>
            <person name="Khan I.M."/>
            <person name="Zammit P."/>
            <person name="Dadrah K."/>
            <person name="Mazrani W."/>
            <person name="Kessling A."/>
            <person name="Lee J.S."/>
            <person name="Buluwela L."/>
        </authorList>
    </citation>
    <scope>NUCLEOTIDE SEQUENCE [MRNA] OF 232-560</scope>
    <source>
        <strain>129/Sv</strain>
    </source>
</reference>
<reference key="4">
    <citation type="journal article" date="2010" name="Cell">
        <title>A tissue-specific atlas of mouse protein phosphorylation and expression.</title>
        <authorList>
            <person name="Huttlin E.L."/>
            <person name="Jedrychowski M.P."/>
            <person name="Elias J.E."/>
            <person name="Goswami T."/>
            <person name="Rad R."/>
            <person name="Beausoleil S.A."/>
            <person name="Villen J."/>
            <person name="Haas W."/>
            <person name="Sowa M.E."/>
            <person name="Gygi S.P."/>
        </authorList>
    </citation>
    <scope>IDENTIFICATION BY MASS SPECTROMETRY [LARGE SCALE ANALYSIS]</scope>
    <source>
        <tissue>Testis</tissue>
    </source>
</reference>
<reference key="5">
    <citation type="journal article" date="2017" name="Genome Res.">
        <title>Integrated genome and transcriptome sequencing identifies a noncoding mutation in the genome replication factor DONSON as the cause of microcephaly-micromelia syndrome.</title>
        <authorList>
            <person name="Evrony G.D."/>
            <person name="Cordero D.R."/>
            <person name="Shen J."/>
            <person name="Partlow J.N."/>
            <person name="Yu T.W."/>
            <person name="Rodin R.E."/>
            <person name="Hill R.S."/>
            <person name="Coulter M.E."/>
            <person name="Lam A.N."/>
            <person name="Jayaraman D."/>
            <person name="Gerrelli D."/>
            <person name="Diaz D.G."/>
            <person name="Santos C."/>
            <person name="Morrison V."/>
            <person name="Galli A."/>
            <person name="Tschulena U."/>
            <person name="Wiemann S."/>
            <person name="Martel M.J."/>
            <person name="Spooner B."/>
            <person name="Ryu S.C."/>
            <person name="Elhosary P.C."/>
            <person name="Richardson J.M."/>
            <person name="Tierney D."/>
            <person name="Robinson C.A."/>
            <person name="Chibbar R."/>
            <person name="Diudea D."/>
            <person name="Folkerth R."/>
            <person name="Wiebe S."/>
            <person name="Barkovich A.J."/>
            <person name="Mochida G.H."/>
            <person name="Irvine J."/>
            <person name="Lemire E.G."/>
            <person name="Blakley P."/>
            <person name="Walsh C.A."/>
        </authorList>
    </citation>
    <scope>DEVELOPMENTAL STAGE</scope>
    <scope>DISRUPTION PHENOTYPE</scope>
</reference>
<gene>
    <name type="primary">Donson</name>
    <name type="synonym">ORF60</name>
</gene>
<comment type="function">
    <text evidence="1">Replisome component that maintains genome stability by protecting stalled or damaged replication forks. After the induction of replication stress, required for the stabilization of stalled replication forks, the efficient activation of the intra-S-phase and G/2M cell-cycle checkpoints and the maintenance of genome stability.</text>
</comment>
<comment type="subunit">
    <text evidence="1">Component of the replisome complex composed of at least MCM2, MCM7, PCNA and TICRR; interaction at least with PCNA occurs during DNA replication.</text>
</comment>
<comment type="subcellular location">
    <subcellularLocation>
        <location evidence="1">Nucleus</location>
    </subcellularLocation>
    <text evidence="1">Localizes at DNA replication sites.</text>
</comment>
<comment type="developmental stage">
    <text evidence="3">At 14.5 dpc, widely expressed, including in neocortex, cerebellum, lung, liver, hindlimb, intestine, as well as forelimb, kidney and spinal cord vertebrae.</text>
</comment>
<comment type="disruption phenotype">
    <text evidence="3">Early embryonic lethality. Heterozygous mice show no overt phenotype.</text>
</comment>
<comment type="similarity">
    <text evidence="4">Belongs to the DONSON family.</text>
</comment>
<organism>
    <name type="scientific">Mus musculus</name>
    <name type="common">Mouse</name>
    <dbReference type="NCBI Taxonomy" id="10090"/>
    <lineage>
        <taxon>Eukaryota</taxon>
        <taxon>Metazoa</taxon>
        <taxon>Chordata</taxon>
        <taxon>Craniata</taxon>
        <taxon>Vertebrata</taxon>
        <taxon>Euteleostomi</taxon>
        <taxon>Mammalia</taxon>
        <taxon>Eutheria</taxon>
        <taxon>Euarchontoglires</taxon>
        <taxon>Glires</taxon>
        <taxon>Rodentia</taxon>
        <taxon>Myomorpha</taxon>
        <taxon>Muroidea</taxon>
        <taxon>Muridae</taxon>
        <taxon>Murinae</taxon>
        <taxon>Mus</taxon>
        <taxon>Mus</taxon>
    </lineage>
</organism>
<accession>Q9QXP4</accession>
<accession>Q80V93</accession>
<accession>Q8BV55</accession>
<proteinExistence type="evidence at protein level"/>
<protein>
    <recommendedName>
        <fullName>Protein downstream neighbor of Son</fullName>
    </recommendedName>
    <alternativeName>
        <fullName>Protein 3SG</fullName>
    </alternativeName>
</protein>
<keyword id="KW-0217">Developmental protein</keyword>
<keyword id="KW-0539">Nucleus</keyword>
<keyword id="KW-1185">Reference proteome</keyword>